<reference key="1">
    <citation type="journal article" date="1992" name="J. Biol. Chem.">
        <title>Cloning, sequencing, and expression of the Escherichia coli peptide methionine sulfoxide reductase gene.</title>
        <authorList>
            <person name="Rahman M.A."/>
            <person name="Nelson H."/>
            <person name="Weissbach H."/>
            <person name="Brot N."/>
        </authorList>
    </citation>
    <scope>NUCLEOTIDE SEQUENCE [GENOMIC DNA]</scope>
    <scope>PROTEIN SEQUENCE OF 2-30</scope>
    <source>
        <strain>B</strain>
    </source>
</reference>
<reference key="2">
    <citation type="journal article" date="1995" name="Nucleic Acids Res.">
        <title>Analysis of the Escherichia coli genome VI: DNA sequence of the region from 92.8 through 100 minutes.</title>
        <authorList>
            <person name="Burland V.D."/>
            <person name="Plunkett G. III"/>
            <person name="Sofia H.J."/>
            <person name="Daniels D.L."/>
            <person name="Blattner F.R."/>
        </authorList>
    </citation>
    <scope>NUCLEOTIDE SEQUENCE [LARGE SCALE GENOMIC DNA]</scope>
    <source>
        <strain>K12 / MG1655 / ATCC 47076</strain>
    </source>
</reference>
<reference key="3">
    <citation type="journal article" date="1997" name="Science">
        <title>The complete genome sequence of Escherichia coli K-12.</title>
        <authorList>
            <person name="Blattner F.R."/>
            <person name="Plunkett G. III"/>
            <person name="Bloch C.A."/>
            <person name="Perna N.T."/>
            <person name="Burland V."/>
            <person name="Riley M."/>
            <person name="Collado-Vides J."/>
            <person name="Glasner J.D."/>
            <person name="Rode C.K."/>
            <person name="Mayhew G.F."/>
            <person name="Gregor J."/>
            <person name="Davis N.W."/>
            <person name="Kirkpatrick H.A."/>
            <person name="Goeden M.A."/>
            <person name="Rose D.J."/>
            <person name="Mau B."/>
            <person name="Shao Y."/>
        </authorList>
    </citation>
    <scope>NUCLEOTIDE SEQUENCE [LARGE SCALE GENOMIC DNA]</scope>
    <source>
        <strain>K12 / MG1655 / ATCC 47076</strain>
    </source>
</reference>
<reference key="4">
    <citation type="journal article" date="2006" name="Mol. Syst. Biol.">
        <title>Highly accurate genome sequences of Escherichia coli K-12 strains MG1655 and W3110.</title>
        <authorList>
            <person name="Hayashi K."/>
            <person name="Morooka N."/>
            <person name="Yamamoto Y."/>
            <person name="Fujita K."/>
            <person name="Isono K."/>
            <person name="Choi S."/>
            <person name="Ohtsubo E."/>
            <person name="Baba T."/>
            <person name="Wanner B.L."/>
            <person name="Mori H."/>
            <person name="Horiuchi T."/>
        </authorList>
    </citation>
    <scope>NUCLEOTIDE SEQUENCE [LARGE SCALE GENOMIC DNA]</scope>
    <source>
        <strain>K12 / W3110 / ATCC 27325 / DSM 5911</strain>
    </source>
</reference>
<reference key="5">
    <citation type="journal article" date="2000" name="J. Biol. Chem.">
        <title>A sulfenic acid enzyme intermediate is involved in the catalytic mechanism of peptide methionine sulfoxide reductase from Escherichia coli.</title>
        <authorList>
            <person name="Boschi-Muller S."/>
            <person name="Azza S."/>
            <person name="Sanglier-Cianferani S."/>
            <person name="Talfournier F."/>
            <person name="van Dorsselaer A."/>
            <person name="Branlant G."/>
        </authorList>
    </citation>
    <scope>FUNCTION</scope>
    <scope>CATALYTIC ACTIVITY</scope>
    <scope>ACTIVE SITE</scope>
    <scope>DISULFIDE BOND</scope>
    <scope>MUTAGENESIS OF CYS-52; CYS-87; CYS-199 AND CYS-207</scope>
</reference>
<reference key="6">
    <citation type="journal article" date="2000" name="Structure">
        <title>Crystal structure of the Escherichia coli peptide methionine sulphoxide reductase at 1.9-A resolution.</title>
        <authorList>
            <person name="Tete-Favier F."/>
            <person name="Cobessi D."/>
            <person name="Boschi-Muller S."/>
            <person name="Azza S."/>
            <person name="Branlant G."/>
            <person name="Aubry A."/>
        </authorList>
    </citation>
    <scope>X-RAY CRYSTALLOGRAPHY (1.9 ANGSTROMS)</scope>
</reference>
<sequence>MSLFDKKHLVSPADALPGRNTPMPVATLHAVNGHSMTNVPDGMEIAIFAMGCFWGVERLFWQLPGVYSTAAGYTGGYTPNPTYREVCSGDTGHAEAVRIVYDPSVISYEQLLQVFWENHDPAQGMRQGNDHGTQYRSAIYPLTPEQDAAARASLERFQAAMLAADDDRHITTEIANATPFYYAEDDHQQYLHKNPYGYCGIGGIGVCLPPEA</sequence>
<comment type="function">
    <text evidence="1">Could have an important function as a repair enzyme for proteins that have been inactivated by oxidation. Catalyzes the reversible oxidation-reduction of methionine sulfoxide in proteins to methionine.</text>
</comment>
<comment type="catalytic activity">
    <reaction evidence="1">
        <text>L-methionyl-[protein] + [thioredoxin]-disulfide + H2O = L-methionyl-(S)-S-oxide-[protein] + [thioredoxin]-dithiol</text>
        <dbReference type="Rhea" id="RHEA:14217"/>
        <dbReference type="Rhea" id="RHEA-COMP:10698"/>
        <dbReference type="Rhea" id="RHEA-COMP:10700"/>
        <dbReference type="Rhea" id="RHEA-COMP:12313"/>
        <dbReference type="Rhea" id="RHEA-COMP:12315"/>
        <dbReference type="ChEBI" id="CHEBI:15377"/>
        <dbReference type="ChEBI" id="CHEBI:16044"/>
        <dbReference type="ChEBI" id="CHEBI:29950"/>
        <dbReference type="ChEBI" id="CHEBI:44120"/>
        <dbReference type="ChEBI" id="CHEBI:50058"/>
        <dbReference type="EC" id="1.8.4.11"/>
    </reaction>
</comment>
<comment type="catalytic activity">
    <reaction evidence="1">
        <text>[thioredoxin]-disulfide + L-methionine + H2O = L-methionine (S)-S-oxide + [thioredoxin]-dithiol</text>
        <dbReference type="Rhea" id="RHEA:19993"/>
        <dbReference type="Rhea" id="RHEA-COMP:10698"/>
        <dbReference type="Rhea" id="RHEA-COMP:10700"/>
        <dbReference type="ChEBI" id="CHEBI:15377"/>
        <dbReference type="ChEBI" id="CHEBI:29950"/>
        <dbReference type="ChEBI" id="CHEBI:50058"/>
        <dbReference type="ChEBI" id="CHEBI:57844"/>
        <dbReference type="ChEBI" id="CHEBI:58772"/>
        <dbReference type="EC" id="1.8.4.11"/>
    </reaction>
</comment>
<comment type="similarity">
    <text evidence="3">Belongs to the MsrA Met sulfoxide reductase family.</text>
</comment>
<feature type="initiator methionine" description="Removed" evidence="2">
    <location>
        <position position="1"/>
    </location>
</feature>
<feature type="chain" id="PRO_0000138546" description="Peptide methionine sulfoxide reductase MsrA">
    <location>
        <begin position="2"/>
        <end position="212"/>
    </location>
</feature>
<feature type="active site" description="Cysteine sulfenic acid (-SOH) intermediate" evidence="1">
    <location>
        <position position="52"/>
    </location>
</feature>
<feature type="disulfide bond" description="Redox-active; alternate" evidence="1">
    <location>
        <begin position="52"/>
        <end position="199"/>
    </location>
</feature>
<feature type="disulfide bond" description="Redox-active; alternate" evidence="1">
    <location>
        <begin position="199"/>
        <end position="207"/>
    </location>
</feature>
<feature type="mutagenesis site" description="Loss of activity." evidence="1">
    <original>C</original>
    <variation>S</variation>
    <location>
        <position position="52"/>
    </location>
</feature>
<feature type="mutagenesis site" description="No effect." evidence="1">
    <original>C</original>
    <variation>S</variation>
    <location>
        <position position="87"/>
    </location>
</feature>
<feature type="mutagenesis site" description="Decrease in activity." evidence="1">
    <original>C</original>
    <variation>S</variation>
    <location>
        <position position="199"/>
    </location>
</feature>
<feature type="mutagenesis site" description="Decrease in activity." evidence="1">
    <original>C</original>
    <variation>S</variation>
    <location>
        <position position="207"/>
    </location>
</feature>
<feature type="helix" evidence="6">
    <location>
        <begin position="6"/>
        <end position="8"/>
    </location>
</feature>
<feature type="helix" evidence="4">
    <location>
        <begin position="12"/>
        <end position="14"/>
    </location>
</feature>
<feature type="turn" evidence="4">
    <location>
        <begin position="30"/>
        <end position="32"/>
    </location>
</feature>
<feature type="strand" evidence="4">
    <location>
        <begin position="35"/>
        <end position="37"/>
    </location>
</feature>
<feature type="strand" evidence="4">
    <location>
        <begin position="44"/>
        <end position="49"/>
    </location>
</feature>
<feature type="helix" evidence="4">
    <location>
        <begin position="53"/>
        <end position="61"/>
    </location>
</feature>
<feature type="strand" evidence="4">
    <location>
        <begin position="66"/>
        <end position="77"/>
    </location>
</feature>
<feature type="helix" evidence="4">
    <location>
        <begin position="83"/>
        <end position="88"/>
    </location>
</feature>
<feature type="strand" evidence="5">
    <location>
        <begin position="89"/>
        <end position="91"/>
    </location>
</feature>
<feature type="strand" evidence="4">
    <location>
        <begin position="94"/>
        <end position="101"/>
    </location>
</feature>
<feature type="turn" evidence="4">
    <location>
        <begin position="103"/>
        <end position="105"/>
    </location>
</feature>
<feature type="helix" evidence="4">
    <location>
        <begin position="108"/>
        <end position="117"/>
    </location>
</feature>
<feature type="strand" evidence="4">
    <location>
        <begin position="123"/>
        <end position="127"/>
    </location>
</feature>
<feature type="strand" evidence="4">
    <location>
        <begin position="130"/>
        <end position="132"/>
    </location>
</feature>
<feature type="helix" evidence="4">
    <location>
        <begin position="133"/>
        <end position="135"/>
    </location>
</feature>
<feature type="strand" evidence="7">
    <location>
        <begin position="138"/>
        <end position="140"/>
    </location>
</feature>
<feature type="helix" evidence="4">
    <location>
        <begin position="144"/>
        <end position="163"/>
    </location>
</feature>
<feature type="strand" evidence="4">
    <location>
        <begin position="180"/>
        <end position="182"/>
    </location>
</feature>
<feature type="helix" evidence="4">
    <location>
        <begin position="185"/>
        <end position="187"/>
    </location>
</feature>
<feature type="helix" evidence="4">
    <location>
        <begin position="190"/>
        <end position="193"/>
    </location>
</feature>
<feature type="strand" evidence="7">
    <location>
        <begin position="200"/>
        <end position="203"/>
    </location>
</feature>
<keyword id="KW-0002">3D-structure</keyword>
<keyword id="KW-0903">Direct protein sequencing</keyword>
<keyword id="KW-1015">Disulfide bond</keyword>
<keyword id="KW-0560">Oxidoreductase</keyword>
<keyword id="KW-0676">Redox-active center</keyword>
<keyword id="KW-1185">Reference proteome</keyword>
<dbReference type="EC" id="1.8.4.11" evidence="1"/>
<dbReference type="EMBL" id="M89992">
    <property type="protein sequence ID" value="AAA24399.1"/>
    <property type="molecule type" value="Genomic_DNA"/>
</dbReference>
<dbReference type="EMBL" id="U14003">
    <property type="protein sequence ID" value="AAA97115.1"/>
    <property type="molecule type" value="Genomic_DNA"/>
</dbReference>
<dbReference type="EMBL" id="U00096">
    <property type="protein sequence ID" value="AAC77176.1"/>
    <property type="molecule type" value="Genomic_DNA"/>
</dbReference>
<dbReference type="EMBL" id="AP009048">
    <property type="protein sequence ID" value="BAE78220.1"/>
    <property type="molecule type" value="Genomic_DNA"/>
</dbReference>
<dbReference type="PIR" id="S56444">
    <property type="entry name" value="S56444"/>
</dbReference>
<dbReference type="RefSeq" id="NP_418640.1">
    <property type="nucleotide sequence ID" value="NC_000913.3"/>
</dbReference>
<dbReference type="RefSeq" id="WP_001295196.1">
    <property type="nucleotide sequence ID" value="NZ_STEB01000013.1"/>
</dbReference>
<dbReference type="PDB" id="1FF3">
    <property type="method" value="X-ray"/>
    <property type="resolution" value="1.90 A"/>
    <property type="chains" value="A/B/C=2-212"/>
</dbReference>
<dbReference type="PDB" id="2GT3">
    <property type="method" value="NMR"/>
    <property type="chains" value="A=1-212"/>
</dbReference>
<dbReference type="PDB" id="2IEM">
    <property type="method" value="NMR"/>
    <property type="chains" value="A=2-212"/>
</dbReference>
<dbReference type="PDB" id="6YEV">
    <property type="method" value="X-ray"/>
    <property type="resolution" value="2.94 A"/>
    <property type="chains" value="A/B/C/D=1-212"/>
</dbReference>
<dbReference type="PDB" id="7OT4">
    <property type="method" value="X-ray"/>
    <property type="resolution" value="2.19 A"/>
    <property type="chains" value="A/B=1-212"/>
</dbReference>
<dbReference type="PDBsum" id="1FF3"/>
<dbReference type="PDBsum" id="2GT3"/>
<dbReference type="PDBsum" id="2IEM"/>
<dbReference type="PDBsum" id="6YEV"/>
<dbReference type="PDBsum" id="7OT4"/>
<dbReference type="SMR" id="P0A744"/>
<dbReference type="BioGRID" id="4259307">
    <property type="interactions" value="43"/>
</dbReference>
<dbReference type="BioGRID" id="853026">
    <property type="interactions" value="1"/>
</dbReference>
<dbReference type="FunCoup" id="P0A744">
    <property type="interactions" value="805"/>
</dbReference>
<dbReference type="IntAct" id="P0A744">
    <property type="interactions" value="4"/>
</dbReference>
<dbReference type="STRING" id="511145.b4219"/>
<dbReference type="jPOST" id="P0A744"/>
<dbReference type="PaxDb" id="511145-b4219"/>
<dbReference type="EnsemblBacteria" id="AAC77176">
    <property type="protein sequence ID" value="AAC77176"/>
    <property type="gene ID" value="b4219"/>
</dbReference>
<dbReference type="GeneID" id="93777602"/>
<dbReference type="GeneID" id="948734"/>
<dbReference type="KEGG" id="ecj:JW4178"/>
<dbReference type="KEGG" id="eco:b4219"/>
<dbReference type="KEGG" id="ecoc:C3026_22785"/>
<dbReference type="PATRIC" id="fig|1411691.4.peg.2482"/>
<dbReference type="EchoBASE" id="EB1403"/>
<dbReference type="eggNOG" id="COG0225">
    <property type="taxonomic scope" value="Bacteria"/>
</dbReference>
<dbReference type="HOGENOM" id="CLU_031040_10_3_6"/>
<dbReference type="InParanoid" id="P0A744"/>
<dbReference type="OMA" id="LFWESHD"/>
<dbReference type="OrthoDB" id="4174719at2"/>
<dbReference type="PhylomeDB" id="P0A744"/>
<dbReference type="BioCyc" id="EcoCyc:EG11433-MONOMER"/>
<dbReference type="BioCyc" id="MetaCyc:EG11433-MONOMER"/>
<dbReference type="BRENDA" id="1.8.4.11">
    <property type="organism ID" value="2026"/>
</dbReference>
<dbReference type="EvolutionaryTrace" id="P0A744"/>
<dbReference type="PRO" id="PR:P0A744"/>
<dbReference type="Proteomes" id="UP000000625">
    <property type="component" value="Chromosome"/>
</dbReference>
<dbReference type="GO" id="GO:0005737">
    <property type="term" value="C:cytoplasm"/>
    <property type="evidence" value="ECO:0000318"/>
    <property type="project" value="GO_Central"/>
</dbReference>
<dbReference type="GO" id="GO:0005829">
    <property type="term" value="C:cytosol"/>
    <property type="evidence" value="ECO:0000314"/>
    <property type="project" value="EcoCyc"/>
</dbReference>
<dbReference type="GO" id="GO:0036456">
    <property type="term" value="F:L-methionine-(S)-S-oxide reductase activity"/>
    <property type="evidence" value="ECO:0000314"/>
    <property type="project" value="EcoCyc"/>
</dbReference>
<dbReference type="GO" id="GO:0016671">
    <property type="term" value="F:oxidoreductase activity, acting on a sulfur group of donors, disulfide as acceptor"/>
    <property type="evidence" value="ECO:0000315"/>
    <property type="project" value="EcoCyc"/>
</dbReference>
<dbReference type="GO" id="GO:0008113">
    <property type="term" value="F:peptide-methionine (S)-S-oxide reductase activity"/>
    <property type="evidence" value="ECO:0000314"/>
    <property type="project" value="EcoCyc"/>
</dbReference>
<dbReference type="GO" id="GO:0034599">
    <property type="term" value="P:cellular response to oxidative stress"/>
    <property type="evidence" value="ECO:0000318"/>
    <property type="project" value="GO_Central"/>
</dbReference>
<dbReference type="GO" id="GO:0036211">
    <property type="term" value="P:protein modification process"/>
    <property type="evidence" value="ECO:0007669"/>
    <property type="project" value="UniProtKB-UniRule"/>
</dbReference>
<dbReference type="GO" id="GO:0030091">
    <property type="term" value="P:protein repair"/>
    <property type="evidence" value="ECO:0000314"/>
    <property type="project" value="EcoCyc"/>
</dbReference>
<dbReference type="GO" id="GO:0006979">
    <property type="term" value="P:response to oxidative stress"/>
    <property type="evidence" value="ECO:0000315"/>
    <property type="project" value="EcoCyc"/>
</dbReference>
<dbReference type="FunFam" id="3.30.1060.10:FF:000001">
    <property type="entry name" value="Peptide methionine sulfoxide reductase MsrA"/>
    <property type="match status" value="1"/>
</dbReference>
<dbReference type="Gene3D" id="3.30.1060.10">
    <property type="entry name" value="Peptide methionine sulphoxide reductase MsrA"/>
    <property type="match status" value="1"/>
</dbReference>
<dbReference type="HAMAP" id="MF_01401">
    <property type="entry name" value="MsrA"/>
    <property type="match status" value="1"/>
</dbReference>
<dbReference type="InterPro" id="IPR002569">
    <property type="entry name" value="Met_Sox_Rdtase_MsrA_dom"/>
</dbReference>
<dbReference type="InterPro" id="IPR036509">
    <property type="entry name" value="Met_Sox_Rdtase_MsrA_sf"/>
</dbReference>
<dbReference type="InterPro" id="IPR050162">
    <property type="entry name" value="MsrA_MetSO_reductase"/>
</dbReference>
<dbReference type="NCBIfam" id="TIGR00401">
    <property type="entry name" value="msrA"/>
    <property type="match status" value="1"/>
</dbReference>
<dbReference type="PANTHER" id="PTHR42799">
    <property type="entry name" value="MITOCHONDRIAL PEPTIDE METHIONINE SULFOXIDE REDUCTASE"/>
    <property type="match status" value="1"/>
</dbReference>
<dbReference type="PANTHER" id="PTHR42799:SF2">
    <property type="entry name" value="MITOCHONDRIAL PEPTIDE METHIONINE SULFOXIDE REDUCTASE"/>
    <property type="match status" value="1"/>
</dbReference>
<dbReference type="Pfam" id="PF01625">
    <property type="entry name" value="PMSR"/>
    <property type="match status" value="1"/>
</dbReference>
<dbReference type="SUPFAM" id="SSF55068">
    <property type="entry name" value="Peptide methionine sulfoxide reductase"/>
    <property type="match status" value="1"/>
</dbReference>
<evidence type="ECO:0000269" key="1">
    <source>
    </source>
</evidence>
<evidence type="ECO:0000269" key="2">
    <source>
    </source>
</evidence>
<evidence type="ECO:0000305" key="3"/>
<evidence type="ECO:0007829" key="4">
    <source>
        <dbReference type="PDB" id="1FF3"/>
    </source>
</evidence>
<evidence type="ECO:0007829" key="5">
    <source>
        <dbReference type="PDB" id="2IEM"/>
    </source>
</evidence>
<evidence type="ECO:0007829" key="6">
    <source>
        <dbReference type="PDB" id="6YEV"/>
    </source>
</evidence>
<evidence type="ECO:0007829" key="7">
    <source>
        <dbReference type="PDB" id="7OT4"/>
    </source>
</evidence>
<protein>
    <recommendedName>
        <fullName>Peptide methionine sulfoxide reductase MsrA</fullName>
        <shortName>Protein-methionine-S-oxide reductase</shortName>
        <ecNumber evidence="1">1.8.4.11</ecNumber>
    </recommendedName>
    <alternativeName>
        <fullName>Peptide-methionine (S)-S-oxide reductase</fullName>
        <shortName>Peptide Met(O) reductase</shortName>
    </alternativeName>
</protein>
<proteinExistence type="evidence at protein level"/>
<gene>
    <name type="primary">msrA</name>
    <name type="synonym">pms</name>
    <name type="ordered locus">b4219</name>
    <name type="ordered locus">JW4178</name>
</gene>
<name>MSRA_ECOLI</name>
<accession>P0A744</accession>
<accession>P27110</accession>
<accession>Q2M686</accession>
<organism>
    <name type="scientific">Escherichia coli (strain K12)</name>
    <dbReference type="NCBI Taxonomy" id="83333"/>
    <lineage>
        <taxon>Bacteria</taxon>
        <taxon>Pseudomonadati</taxon>
        <taxon>Pseudomonadota</taxon>
        <taxon>Gammaproteobacteria</taxon>
        <taxon>Enterobacterales</taxon>
        <taxon>Enterobacteriaceae</taxon>
        <taxon>Escherichia</taxon>
    </lineage>
</organism>